<dbReference type="EMBL" id="AL590842">
    <property type="protein sequence ID" value="CAL22653.1"/>
    <property type="molecule type" value="Genomic_DNA"/>
</dbReference>
<dbReference type="EMBL" id="AE009952">
    <property type="protein sequence ID" value="AAM87643.1"/>
    <property type="molecule type" value="Genomic_DNA"/>
</dbReference>
<dbReference type="EMBL" id="AE017042">
    <property type="protein sequence ID" value="AAS64132.1"/>
    <property type="molecule type" value="Genomic_DNA"/>
</dbReference>
<dbReference type="PIR" id="AB0496">
    <property type="entry name" value="AB0496"/>
</dbReference>
<dbReference type="RefSeq" id="WP_002209634.1">
    <property type="nucleotide sequence ID" value="NZ_WUCM01000035.1"/>
</dbReference>
<dbReference type="RefSeq" id="YP_002348937.1">
    <property type="nucleotide sequence ID" value="NC_003143.1"/>
</dbReference>
<dbReference type="SMR" id="Q8Z9V7"/>
<dbReference type="IntAct" id="Q8Z9V7">
    <property type="interactions" value="3"/>
</dbReference>
<dbReference type="STRING" id="214092.YPO4083"/>
<dbReference type="PaxDb" id="214092-YPO4083"/>
<dbReference type="DNASU" id="1149047"/>
<dbReference type="EnsemblBacteria" id="AAS64132">
    <property type="protein sequence ID" value="AAS64132"/>
    <property type="gene ID" value="YP_3992"/>
</dbReference>
<dbReference type="KEGG" id="ype:YPO4083"/>
<dbReference type="KEGG" id="ypk:y4100"/>
<dbReference type="KEGG" id="ypm:YP_3992"/>
<dbReference type="PATRIC" id="fig|214092.21.peg.4624"/>
<dbReference type="eggNOG" id="COG0569">
    <property type="taxonomic scope" value="Bacteria"/>
</dbReference>
<dbReference type="eggNOG" id="COG2985">
    <property type="taxonomic scope" value="Bacteria"/>
</dbReference>
<dbReference type="HOGENOM" id="CLU_035023_3_1_6"/>
<dbReference type="OMA" id="AMWLIRL"/>
<dbReference type="OrthoDB" id="5166626at2"/>
<dbReference type="Proteomes" id="UP000000815">
    <property type="component" value="Chromosome"/>
</dbReference>
<dbReference type="Proteomes" id="UP000001019">
    <property type="component" value="Chromosome"/>
</dbReference>
<dbReference type="Proteomes" id="UP000002490">
    <property type="component" value="Chromosome"/>
</dbReference>
<dbReference type="GO" id="GO:0005886">
    <property type="term" value="C:plasma membrane"/>
    <property type="evidence" value="ECO:0000318"/>
    <property type="project" value="GO_Central"/>
</dbReference>
<dbReference type="GO" id="GO:0008324">
    <property type="term" value="F:monoatomic cation transmembrane transporter activity"/>
    <property type="evidence" value="ECO:0007669"/>
    <property type="project" value="InterPro"/>
</dbReference>
<dbReference type="GO" id="GO:0006813">
    <property type="term" value="P:potassium ion transport"/>
    <property type="evidence" value="ECO:0007669"/>
    <property type="project" value="InterPro"/>
</dbReference>
<dbReference type="Gene3D" id="3.30.70.1450">
    <property type="entry name" value="Regulator of K+ conductance, C-terminal domain"/>
    <property type="match status" value="2"/>
</dbReference>
<dbReference type="HAMAP" id="MF_01016">
    <property type="entry name" value="YidE"/>
    <property type="match status" value="1"/>
</dbReference>
<dbReference type="InterPro" id="IPR050144">
    <property type="entry name" value="AAE_transporter"/>
</dbReference>
<dbReference type="InterPro" id="IPR006037">
    <property type="entry name" value="RCK_C"/>
</dbReference>
<dbReference type="InterPro" id="IPR036721">
    <property type="entry name" value="RCK_C_sf"/>
</dbReference>
<dbReference type="InterPro" id="IPR023018">
    <property type="entry name" value="Transpt_YidE_put"/>
</dbReference>
<dbReference type="InterPro" id="IPR006512">
    <property type="entry name" value="YidE_YbjL"/>
</dbReference>
<dbReference type="NCBIfam" id="NF003007">
    <property type="entry name" value="PRK03818.1"/>
    <property type="match status" value="1"/>
</dbReference>
<dbReference type="NCBIfam" id="TIGR01625">
    <property type="entry name" value="YidE_YbjL_dupl"/>
    <property type="match status" value="2"/>
</dbReference>
<dbReference type="PANTHER" id="PTHR30445">
    <property type="entry name" value="K(+)_H(+) ANTIPORTER SUBUNIT KHTT"/>
    <property type="match status" value="1"/>
</dbReference>
<dbReference type="PANTHER" id="PTHR30445:SF3">
    <property type="entry name" value="TRANSPORT PROTEIN YIDE-RELATED"/>
    <property type="match status" value="1"/>
</dbReference>
<dbReference type="Pfam" id="PF06826">
    <property type="entry name" value="Asp-Al_Ex"/>
    <property type="match status" value="2"/>
</dbReference>
<dbReference type="Pfam" id="PF02080">
    <property type="entry name" value="TrkA_C"/>
    <property type="match status" value="2"/>
</dbReference>
<dbReference type="SUPFAM" id="SSF116726">
    <property type="entry name" value="TrkA C-terminal domain-like"/>
    <property type="match status" value="2"/>
</dbReference>
<dbReference type="PROSITE" id="PS51202">
    <property type="entry name" value="RCK_C"/>
    <property type="match status" value="2"/>
</dbReference>
<organism>
    <name type="scientific">Yersinia pestis</name>
    <dbReference type="NCBI Taxonomy" id="632"/>
    <lineage>
        <taxon>Bacteria</taxon>
        <taxon>Pseudomonadati</taxon>
        <taxon>Pseudomonadota</taxon>
        <taxon>Gammaproteobacteria</taxon>
        <taxon>Enterobacterales</taxon>
        <taxon>Yersiniaceae</taxon>
        <taxon>Yersinia</taxon>
    </lineage>
</organism>
<reference key="1">
    <citation type="journal article" date="2001" name="Nature">
        <title>Genome sequence of Yersinia pestis, the causative agent of plague.</title>
        <authorList>
            <person name="Parkhill J."/>
            <person name="Wren B.W."/>
            <person name="Thomson N.R."/>
            <person name="Titball R.W."/>
            <person name="Holden M.T.G."/>
            <person name="Prentice M.B."/>
            <person name="Sebaihia M."/>
            <person name="James K.D."/>
            <person name="Churcher C.M."/>
            <person name="Mungall K.L."/>
            <person name="Baker S."/>
            <person name="Basham D."/>
            <person name="Bentley S.D."/>
            <person name="Brooks K."/>
            <person name="Cerdeno-Tarraga A.-M."/>
            <person name="Chillingworth T."/>
            <person name="Cronin A."/>
            <person name="Davies R.M."/>
            <person name="Davis P."/>
            <person name="Dougan G."/>
            <person name="Feltwell T."/>
            <person name="Hamlin N."/>
            <person name="Holroyd S."/>
            <person name="Jagels K."/>
            <person name="Karlyshev A.V."/>
            <person name="Leather S."/>
            <person name="Moule S."/>
            <person name="Oyston P.C.F."/>
            <person name="Quail M.A."/>
            <person name="Rutherford K.M."/>
            <person name="Simmonds M."/>
            <person name="Skelton J."/>
            <person name="Stevens K."/>
            <person name="Whitehead S."/>
            <person name="Barrell B.G."/>
        </authorList>
    </citation>
    <scope>NUCLEOTIDE SEQUENCE [LARGE SCALE GENOMIC DNA]</scope>
    <source>
        <strain>CO-92 / Biovar Orientalis</strain>
    </source>
</reference>
<reference key="2">
    <citation type="journal article" date="2002" name="J. Bacteriol.">
        <title>Genome sequence of Yersinia pestis KIM.</title>
        <authorList>
            <person name="Deng W."/>
            <person name="Burland V."/>
            <person name="Plunkett G. III"/>
            <person name="Boutin A."/>
            <person name="Mayhew G.F."/>
            <person name="Liss P."/>
            <person name="Perna N.T."/>
            <person name="Rose D.J."/>
            <person name="Mau B."/>
            <person name="Zhou S."/>
            <person name="Schwartz D.C."/>
            <person name="Fetherston J.D."/>
            <person name="Lindler L.E."/>
            <person name="Brubaker R.R."/>
            <person name="Plano G.V."/>
            <person name="Straley S.C."/>
            <person name="McDonough K.A."/>
            <person name="Nilles M.L."/>
            <person name="Matson J.S."/>
            <person name="Blattner F.R."/>
            <person name="Perry R.D."/>
        </authorList>
    </citation>
    <scope>NUCLEOTIDE SEQUENCE [LARGE SCALE GENOMIC DNA]</scope>
    <source>
        <strain>KIM10+ / Biovar Mediaevalis</strain>
    </source>
</reference>
<reference key="3">
    <citation type="journal article" date="2004" name="DNA Res.">
        <title>Complete genome sequence of Yersinia pestis strain 91001, an isolate avirulent to humans.</title>
        <authorList>
            <person name="Song Y."/>
            <person name="Tong Z."/>
            <person name="Wang J."/>
            <person name="Wang L."/>
            <person name="Guo Z."/>
            <person name="Han Y."/>
            <person name="Zhang J."/>
            <person name="Pei D."/>
            <person name="Zhou D."/>
            <person name="Qin H."/>
            <person name="Pang X."/>
            <person name="Han Y."/>
            <person name="Zhai J."/>
            <person name="Li M."/>
            <person name="Cui B."/>
            <person name="Qi Z."/>
            <person name="Jin L."/>
            <person name="Dai R."/>
            <person name="Chen F."/>
            <person name="Li S."/>
            <person name="Ye C."/>
            <person name="Du Z."/>
            <person name="Lin W."/>
            <person name="Wang J."/>
            <person name="Yu J."/>
            <person name="Yang H."/>
            <person name="Wang J."/>
            <person name="Huang P."/>
            <person name="Yang R."/>
        </authorList>
    </citation>
    <scope>NUCLEOTIDE SEQUENCE [LARGE SCALE GENOMIC DNA]</scope>
    <source>
        <strain>91001 / Biovar Mediaevalis</strain>
    </source>
</reference>
<comment type="subcellular location">
    <subcellularLocation>
        <location evidence="1">Cell membrane</location>
        <topology evidence="1">Multi-pass membrane protein</topology>
    </subcellularLocation>
</comment>
<comment type="similarity">
    <text evidence="1">Belongs to the AAE transporter (TC 2.A.81) family. YidE subfamily.</text>
</comment>
<proteinExistence type="inferred from homology"/>
<sequence>MSAIALTVSMLALVAVLGLWIGNWKIYGVGLGIGGVLFGGIIVGHFAQTYQIVLNGDMLHFIQEFGLILFVYTIGIQVGPGFFSSLRVSGLRLNCFAILMVVVGGLVTAIIHKLFAVPLPIILGVFSGAVTNTPALGAAQQILTDLGSPPQLVSQMGMGYAMAYPFGICGILLVMWLIRLFFKINIDREAKAFDSSYGQNRELLQTMNVAVRNPNLHGLSVQDVPLLNSDEVVCSRLKRGDLLMVPMPATVIEIGDYLHLVGQRDALEKVRLVVGEEVDVTLSTAGTALQTARVVVTNEAVLGKKIRDLNLKQKYDVVITRLNRAGIELVASNSASLQFGDILNLVGRPEAIEAVSAIVGNAQQKLQQVQMLPVFIGVGLGVLLGSIPLFVPGFPAALRLGLAGGPLVVALILGRIGSIGKLYWFMPPSANLALRELGIVLFLSVVGLKSGGDFINTLVNGDGLAWIGYGAMITGIPLLTVGILARMLVKMNYLTLCGMLAGSMTDPPALAFANGLHPTSGAAALSYATVYPLAMFLRIMSPQILAVLFWTL</sequence>
<name>Y4083_YERPE</name>
<protein>
    <recommendedName>
        <fullName evidence="1">Putative transport protein YPO4083/y4100/YP_3992</fullName>
    </recommendedName>
</protein>
<evidence type="ECO:0000255" key="1">
    <source>
        <dbReference type="HAMAP-Rule" id="MF_01016"/>
    </source>
</evidence>
<gene>
    <name type="ordered locus">YPO4083</name>
    <name type="ordered locus">y4100</name>
    <name type="ordered locus">YP_3992</name>
</gene>
<feature type="chain" id="PRO_0000208808" description="Putative transport protein YPO4083/y4100/YP_3992">
    <location>
        <begin position="1"/>
        <end position="552"/>
    </location>
</feature>
<feature type="transmembrane region" description="Helical" evidence="1">
    <location>
        <begin position="1"/>
        <end position="21"/>
    </location>
</feature>
<feature type="transmembrane region" description="Helical" evidence="1">
    <location>
        <begin position="26"/>
        <end position="46"/>
    </location>
</feature>
<feature type="transmembrane region" description="Helical" evidence="1">
    <location>
        <begin position="65"/>
        <end position="85"/>
    </location>
</feature>
<feature type="transmembrane region" description="Helical" evidence="1">
    <location>
        <begin position="96"/>
        <end position="116"/>
    </location>
</feature>
<feature type="transmembrane region" description="Helical" evidence="1">
    <location>
        <begin position="119"/>
        <end position="139"/>
    </location>
</feature>
<feature type="transmembrane region" description="Helical" evidence="1">
    <location>
        <begin position="158"/>
        <end position="178"/>
    </location>
</feature>
<feature type="transmembrane region" description="Helical" evidence="1">
    <location>
        <begin position="371"/>
        <end position="391"/>
    </location>
</feature>
<feature type="transmembrane region" description="Helical" evidence="1">
    <location>
        <begin position="393"/>
        <end position="413"/>
    </location>
</feature>
<feature type="transmembrane region" description="Helical" evidence="1">
    <location>
        <begin position="439"/>
        <end position="459"/>
    </location>
</feature>
<feature type="transmembrane region" description="Helical" evidence="1">
    <location>
        <begin position="464"/>
        <end position="484"/>
    </location>
</feature>
<feature type="transmembrane region" description="Helical" evidence="1">
    <location>
        <begin position="493"/>
        <end position="513"/>
    </location>
</feature>
<feature type="transmembrane region" description="Helical" evidence="1">
    <location>
        <begin position="530"/>
        <end position="550"/>
    </location>
</feature>
<feature type="domain" description="RCK C-terminal 1" evidence="1">
    <location>
        <begin position="192"/>
        <end position="276"/>
    </location>
</feature>
<feature type="domain" description="RCK C-terminal 2" evidence="1">
    <location>
        <begin position="279"/>
        <end position="361"/>
    </location>
</feature>
<keyword id="KW-1003">Cell membrane</keyword>
<keyword id="KW-0472">Membrane</keyword>
<keyword id="KW-1185">Reference proteome</keyword>
<keyword id="KW-0677">Repeat</keyword>
<keyword id="KW-0812">Transmembrane</keyword>
<keyword id="KW-1133">Transmembrane helix</keyword>
<keyword id="KW-0813">Transport</keyword>
<accession>Q8Z9V7</accession>
<accession>Q0W9V1</accession>